<name>REPA_LACPN</name>
<gene>
    <name type="primary">repA</name>
</gene>
<proteinExistence type="inferred from homology"/>
<geneLocation type="plasmid">
    <name>pLB4</name>
</geneLocation>
<comment type="function">
    <text>Regulates the plasmid copy number. RepA binds to the repAB promoter thus controlling the synthesis of the plasmid replication initiator protein RepB.</text>
</comment>
<comment type="subunit">
    <text>Homodimer.</text>
</comment>
<comment type="similarity">
    <text evidence="2">Belongs to the transcriptional regulatory CopG/NikR family.</text>
</comment>
<accession>P20044</accession>
<feature type="chain" id="PRO_0000139316" description="Protein RepA">
    <location>
        <begin position="1"/>
        <end position="52"/>
    </location>
</feature>
<feature type="DNA-binding region" description="H-T-H motif" evidence="1">
    <location>
        <begin position="20"/>
        <end position="40"/>
    </location>
</feature>
<protein>
    <recommendedName>
        <fullName>Protein RepA</fullName>
    </recommendedName>
</protein>
<sequence>MVEVEKKKITLSIPVETNGKLEELAQKYGMTKSGLVNFLVNQVAEAGTIYRQ</sequence>
<dbReference type="EMBL" id="M33531">
    <property type="protein sequence ID" value="AAA25253.1"/>
    <property type="molecule type" value="Genomic_DNA"/>
</dbReference>
<dbReference type="PIR" id="JQ0180">
    <property type="entry name" value="JQ0180"/>
</dbReference>
<dbReference type="RefSeq" id="WP_068281361.1">
    <property type="nucleotide sequence ID" value="NZ_JADMNO010000048.1"/>
</dbReference>
<dbReference type="SMR" id="P20044"/>
<dbReference type="GeneID" id="42983213"/>
<dbReference type="GO" id="GO:0003677">
    <property type="term" value="F:DNA binding"/>
    <property type="evidence" value="ECO:0007669"/>
    <property type="project" value="UniProtKB-KW"/>
</dbReference>
<dbReference type="GO" id="GO:0006276">
    <property type="term" value="P:plasmid maintenance"/>
    <property type="evidence" value="ECO:0007669"/>
    <property type="project" value="UniProtKB-KW"/>
</dbReference>
<dbReference type="GO" id="GO:0006355">
    <property type="term" value="P:regulation of DNA-templated transcription"/>
    <property type="evidence" value="ECO:0007669"/>
    <property type="project" value="InterPro"/>
</dbReference>
<dbReference type="Gene3D" id="1.10.1220.10">
    <property type="entry name" value="Met repressor-like"/>
    <property type="match status" value="1"/>
</dbReference>
<dbReference type="InterPro" id="IPR013321">
    <property type="entry name" value="Arc_rbn_hlx_hlx"/>
</dbReference>
<dbReference type="InterPro" id="IPR010985">
    <property type="entry name" value="Ribbon_hlx_hlx"/>
</dbReference>
<dbReference type="SUPFAM" id="SSF47598">
    <property type="entry name" value="Ribbon-helix-helix"/>
    <property type="match status" value="1"/>
</dbReference>
<keyword id="KW-0238">DNA-binding</keyword>
<keyword id="KW-0614">Plasmid</keyword>
<keyword id="KW-0615">Plasmid copy control</keyword>
<keyword id="KW-0678">Repressor</keyword>
<keyword id="KW-0804">Transcription</keyword>
<keyword id="KW-0805">Transcription regulation</keyword>
<organism>
    <name type="scientific">Lactiplantibacillus plantarum</name>
    <name type="common">Lactobacillus plantarum</name>
    <dbReference type="NCBI Taxonomy" id="1590"/>
    <lineage>
        <taxon>Bacteria</taxon>
        <taxon>Bacillati</taxon>
        <taxon>Bacillota</taxon>
        <taxon>Bacilli</taxon>
        <taxon>Lactobacillales</taxon>
        <taxon>Lactobacillaceae</taxon>
        <taxon>Lactiplantibacillus</taxon>
    </lineage>
</organism>
<reference key="1">
    <citation type="journal article" date="1989" name="Gene">
        <title>Characterization of a cryptic plasmid from Lactobacillus plantarum.</title>
        <authorList>
            <person name="Bates E.E.M."/>
            <person name="Gilbert H.J."/>
        </authorList>
    </citation>
    <scope>NUCLEOTIDE SEQUENCE [GENOMIC DNA]</scope>
    <source>
        <strain>NCDO 1088</strain>
    </source>
</reference>
<evidence type="ECO:0000255" key="1"/>
<evidence type="ECO:0000305" key="2"/>